<evidence type="ECO:0000305" key="1"/>
<comment type="similarity">
    <text evidence="1">Belongs to the CAPAB/TerDEXZ family.</text>
</comment>
<reference key="1">
    <citation type="journal article" date="1997" name="Microbiology">
        <title>A 32 kb nucleotide sequence from the region of the lincomycin-resistance gene (22 degrees-25 degrees) of the Bacillus subtilis chromosome and identification of the site of the lin-2 mutation.</title>
        <authorList>
            <person name="Kumano M."/>
            <person name="Tamakoshi A."/>
            <person name="Yamane K."/>
        </authorList>
    </citation>
    <scope>NUCLEOTIDE SEQUENCE [GENOMIC DNA]</scope>
    <source>
        <strain>168</strain>
    </source>
</reference>
<reference key="2">
    <citation type="journal article" date="1997" name="Nature">
        <title>The complete genome sequence of the Gram-positive bacterium Bacillus subtilis.</title>
        <authorList>
            <person name="Kunst F."/>
            <person name="Ogasawara N."/>
            <person name="Moszer I."/>
            <person name="Albertini A.M."/>
            <person name="Alloni G."/>
            <person name="Azevedo V."/>
            <person name="Bertero M.G."/>
            <person name="Bessieres P."/>
            <person name="Bolotin A."/>
            <person name="Borchert S."/>
            <person name="Borriss R."/>
            <person name="Boursier L."/>
            <person name="Brans A."/>
            <person name="Braun M."/>
            <person name="Brignell S.C."/>
            <person name="Bron S."/>
            <person name="Brouillet S."/>
            <person name="Bruschi C.V."/>
            <person name="Caldwell B."/>
            <person name="Capuano V."/>
            <person name="Carter N.M."/>
            <person name="Choi S.-K."/>
            <person name="Codani J.-J."/>
            <person name="Connerton I.F."/>
            <person name="Cummings N.J."/>
            <person name="Daniel R.A."/>
            <person name="Denizot F."/>
            <person name="Devine K.M."/>
            <person name="Duesterhoeft A."/>
            <person name="Ehrlich S.D."/>
            <person name="Emmerson P.T."/>
            <person name="Entian K.-D."/>
            <person name="Errington J."/>
            <person name="Fabret C."/>
            <person name="Ferrari E."/>
            <person name="Foulger D."/>
            <person name="Fritz C."/>
            <person name="Fujita M."/>
            <person name="Fujita Y."/>
            <person name="Fuma S."/>
            <person name="Galizzi A."/>
            <person name="Galleron N."/>
            <person name="Ghim S.-Y."/>
            <person name="Glaser P."/>
            <person name="Goffeau A."/>
            <person name="Golightly E.J."/>
            <person name="Grandi G."/>
            <person name="Guiseppi G."/>
            <person name="Guy B.J."/>
            <person name="Haga K."/>
            <person name="Haiech J."/>
            <person name="Harwood C.R."/>
            <person name="Henaut A."/>
            <person name="Hilbert H."/>
            <person name="Holsappel S."/>
            <person name="Hosono S."/>
            <person name="Hullo M.-F."/>
            <person name="Itaya M."/>
            <person name="Jones L.-M."/>
            <person name="Joris B."/>
            <person name="Karamata D."/>
            <person name="Kasahara Y."/>
            <person name="Klaerr-Blanchard M."/>
            <person name="Klein C."/>
            <person name="Kobayashi Y."/>
            <person name="Koetter P."/>
            <person name="Koningstein G."/>
            <person name="Krogh S."/>
            <person name="Kumano M."/>
            <person name="Kurita K."/>
            <person name="Lapidus A."/>
            <person name="Lardinois S."/>
            <person name="Lauber J."/>
            <person name="Lazarevic V."/>
            <person name="Lee S.-M."/>
            <person name="Levine A."/>
            <person name="Liu H."/>
            <person name="Masuda S."/>
            <person name="Mauel C."/>
            <person name="Medigue C."/>
            <person name="Medina N."/>
            <person name="Mellado R.P."/>
            <person name="Mizuno M."/>
            <person name="Moestl D."/>
            <person name="Nakai S."/>
            <person name="Noback M."/>
            <person name="Noone D."/>
            <person name="O'Reilly M."/>
            <person name="Ogawa K."/>
            <person name="Ogiwara A."/>
            <person name="Oudega B."/>
            <person name="Park S.-H."/>
            <person name="Parro V."/>
            <person name="Pohl T.M."/>
            <person name="Portetelle D."/>
            <person name="Porwollik S."/>
            <person name="Prescott A.M."/>
            <person name="Presecan E."/>
            <person name="Pujic P."/>
            <person name="Purnelle B."/>
            <person name="Rapoport G."/>
            <person name="Rey M."/>
            <person name="Reynolds S."/>
            <person name="Rieger M."/>
            <person name="Rivolta C."/>
            <person name="Rocha E."/>
            <person name="Roche B."/>
            <person name="Rose M."/>
            <person name="Sadaie Y."/>
            <person name="Sato T."/>
            <person name="Scanlan E."/>
            <person name="Schleich S."/>
            <person name="Schroeter R."/>
            <person name="Scoffone F."/>
            <person name="Sekiguchi J."/>
            <person name="Sekowska A."/>
            <person name="Seror S.J."/>
            <person name="Serror P."/>
            <person name="Shin B.-S."/>
            <person name="Soldo B."/>
            <person name="Sorokin A."/>
            <person name="Tacconi E."/>
            <person name="Takagi T."/>
            <person name="Takahashi H."/>
            <person name="Takemaru K."/>
            <person name="Takeuchi M."/>
            <person name="Tamakoshi A."/>
            <person name="Tanaka T."/>
            <person name="Terpstra P."/>
            <person name="Tognoni A."/>
            <person name="Tosato V."/>
            <person name="Uchiyama S."/>
            <person name="Vandenbol M."/>
            <person name="Vannier F."/>
            <person name="Vassarotti A."/>
            <person name="Viari A."/>
            <person name="Wambutt R."/>
            <person name="Wedler E."/>
            <person name="Wedler H."/>
            <person name="Weitzenegger T."/>
            <person name="Winters P."/>
            <person name="Wipat A."/>
            <person name="Yamamoto H."/>
            <person name="Yamane K."/>
            <person name="Yasumoto K."/>
            <person name="Yata K."/>
            <person name="Yoshida K."/>
            <person name="Yoshikawa H.-F."/>
            <person name="Zumstein E."/>
            <person name="Yoshikawa H."/>
            <person name="Danchin A."/>
        </authorList>
    </citation>
    <scope>NUCLEOTIDE SEQUENCE [LARGE SCALE GENOMIC DNA]</scope>
    <source>
        <strain>168</strain>
    </source>
</reference>
<keyword id="KW-1185">Reference proteome</keyword>
<proteinExistence type="inferred from homology"/>
<accession>O34384</accession>
<feature type="chain" id="PRO_0000170785" description="Uncharacterized protein YceE">
    <location>
        <begin position="1"/>
        <end position="192"/>
    </location>
</feature>
<name>YCEE_BACSU</name>
<organism>
    <name type="scientific">Bacillus subtilis (strain 168)</name>
    <dbReference type="NCBI Taxonomy" id="224308"/>
    <lineage>
        <taxon>Bacteria</taxon>
        <taxon>Bacillati</taxon>
        <taxon>Bacillota</taxon>
        <taxon>Bacilli</taxon>
        <taxon>Bacillales</taxon>
        <taxon>Bacillaceae</taxon>
        <taxon>Bacillus</taxon>
    </lineage>
</organism>
<dbReference type="EMBL" id="AB000617">
    <property type="protein sequence ID" value="BAA22252.1"/>
    <property type="molecule type" value="Genomic_DNA"/>
</dbReference>
<dbReference type="EMBL" id="AL009126">
    <property type="protein sequence ID" value="CAB12085.1"/>
    <property type="molecule type" value="Genomic_DNA"/>
</dbReference>
<dbReference type="PIR" id="G69756">
    <property type="entry name" value="G69756"/>
</dbReference>
<dbReference type="RefSeq" id="NP_388173.1">
    <property type="nucleotide sequence ID" value="NC_000964.3"/>
</dbReference>
<dbReference type="RefSeq" id="WP_003241242.1">
    <property type="nucleotide sequence ID" value="NZ_OZ025638.1"/>
</dbReference>
<dbReference type="SMR" id="O34384"/>
<dbReference type="FunCoup" id="O34384">
    <property type="interactions" value="12"/>
</dbReference>
<dbReference type="IntAct" id="O34384">
    <property type="interactions" value="2"/>
</dbReference>
<dbReference type="MINT" id="O34384"/>
<dbReference type="STRING" id="224308.BSU02910"/>
<dbReference type="jPOST" id="O34384"/>
<dbReference type="PaxDb" id="224308-BSU02910"/>
<dbReference type="EnsemblBacteria" id="CAB12085">
    <property type="protein sequence ID" value="CAB12085"/>
    <property type="gene ID" value="BSU_02910"/>
</dbReference>
<dbReference type="GeneID" id="938368"/>
<dbReference type="KEGG" id="bsu:BSU02910"/>
<dbReference type="PATRIC" id="fig|224308.179.peg.303"/>
<dbReference type="eggNOG" id="COG2310">
    <property type="taxonomic scope" value="Bacteria"/>
</dbReference>
<dbReference type="InParanoid" id="O34384"/>
<dbReference type="OrthoDB" id="4123258at2"/>
<dbReference type="PhylomeDB" id="O34384"/>
<dbReference type="BioCyc" id="BSUB:BSU02910-MONOMER"/>
<dbReference type="Proteomes" id="UP000001570">
    <property type="component" value="Chromosome"/>
</dbReference>
<dbReference type="CDD" id="cd06974">
    <property type="entry name" value="TerD_like"/>
    <property type="match status" value="1"/>
</dbReference>
<dbReference type="FunFam" id="2.60.60.30:FF:000001">
    <property type="entry name" value="Tellurium resistance protein TerD"/>
    <property type="match status" value="1"/>
</dbReference>
<dbReference type="Gene3D" id="2.60.60.30">
    <property type="entry name" value="sav2460 like domains"/>
    <property type="match status" value="1"/>
</dbReference>
<dbReference type="InterPro" id="IPR051324">
    <property type="entry name" value="Stress/Tellurium_Resist"/>
</dbReference>
<dbReference type="InterPro" id="IPR003325">
    <property type="entry name" value="TerD"/>
</dbReference>
<dbReference type="PANTHER" id="PTHR32097">
    <property type="entry name" value="CAMP-BINDING PROTEIN 1-RELATED"/>
    <property type="match status" value="1"/>
</dbReference>
<dbReference type="PANTHER" id="PTHR32097:SF14">
    <property type="entry name" value="TELLURIUM RESISTANCE PROTEIN TERD"/>
    <property type="match status" value="1"/>
</dbReference>
<dbReference type="Pfam" id="PF02342">
    <property type="entry name" value="TerD"/>
    <property type="match status" value="1"/>
</dbReference>
<gene>
    <name type="primary">yceE</name>
    <name type="ordered locus">BSU02910</name>
</gene>
<sequence>MAIQLSKGQRIDLTKTNPGLTKAVIGLGWDTNKYSGGHDFDLDASAFLVDAHDNCVNDLDFVFYNNLEHPSGGVIHTGDNRTGEGDGDDEQIIVDFSKIPAHIEKIGITVTIHDAEARSQNFGQVSNAFVRVVDEETQNELLRFDLGEDFSIETAVVVCELYRHGGEWKFNAIGSGFSGGLAALCRNYGLQV</sequence>
<protein>
    <recommendedName>
        <fullName>Uncharacterized protein YceE</fullName>
    </recommendedName>
</protein>